<proteinExistence type="evidence at protein level"/>
<feature type="chain" id="PRO_0000222154" description="Membrane-associated protein VP24">
    <location>
        <begin position="1"/>
        <end position="251"/>
    </location>
</feature>
<feature type="sequence variant" description="In strain: Isolate mouse-adapted.">
    <original>T</original>
    <variation>I</variation>
    <location>
        <position position="50"/>
    </location>
</feature>
<feature type="sequence variant" description="In strain: Isolate guinea pig-adapted.">
    <original>M</original>
    <variation>I</variation>
    <location>
        <position position="71"/>
    </location>
</feature>
<feature type="sequence variant" description="In strain: Isolate guinea pig-adapted.">
    <original>L</original>
    <variation>P</variation>
    <location>
        <position position="147"/>
    </location>
</feature>
<feature type="sequence variant" description="In strain: Isolate guinea pig-adapted.">
    <original>T</original>
    <variation>I</variation>
    <location>
        <position position="187"/>
    </location>
</feature>
<feature type="mutagenesis site" description="More than 90% loss of interaction with host KPNA5." evidence="8">
    <original>R</original>
    <variation>A</variation>
    <location>
        <position position="137"/>
    </location>
</feature>
<feature type="mutagenesis site" description="Complete loss of interaction with NP." evidence="9">
    <original>V</original>
    <variation>A</variation>
    <location>
        <position position="170"/>
    </location>
</feature>
<feature type="mutagenesis site" description="Complete loss of interaction with NP." evidence="9">
    <original>N</original>
    <variation>A</variation>
    <location>
        <position position="171"/>
    </location>
</feature>
<feature type="helix" evidence="12">
    <location>
        <begin position="16"/>
        <end position="26"/>
    </location>
</feature>
<feature type="strand" evidence="12">
    <location>
        <begin position="30"/>
        <end position="33"/>
    </location>
</feature>
<feature type="strand" evidence="12">
    <location>
        <begin position="35"/>
        <end position="42"/>
    </location>
</feature>
<feature type="strand" evidence="12">
    <location>
        <begin position="45"/>
        <end position="50"/>
    </location>
</feature>
<feature type="helix" evidence="12">
    <location>
        <begin position="54"/>
        <end position="60"/>
    </location>
</feature>
<feature type="strand" evidence="12">
    <location>
        <begin position="62"/>
        <end position="65"/>
    </location>
</feature>
<feature type="turn" evidence="12">
    <location>
        <begin position="67"/>
        <end position="69"/>
    </location>
</feature>
<feature type="helix" evidence="12">
    <location>
        <begin position="70"/>
        <end position="74"/>
    </location>
</feature>
<feature type="helix" evidence="12">
    <location>
        <begin position="77"/>
        <end position="80"/>
    </location>
</feature>
<feature type="strand" evidence="12">
    <location>
        <begin position="85"/>
        <end position="87"/>
    </location>
</feature>
<feature type="helix" evidence="12">
    <location>
        <begin position="90"/>
        <end position="105"/>
    </location>
</feature>
<feature type="strand" evidence="12">
    <location>
        <begin position="108"/>
        <end position="110"/>
    </location>
</feature>
<feature type="turn" evidence="12">
    <location>
        <begin position="113"/>
        <end position="115"/>
    </location>
</feature>
<feature type="helix" evidence="12">
    <location>
        <begin position="116"/>
        <end position="128"/>
    </location>
</feature>
<feature type="helix" evidence="12">
    <location>
        <begin position="139"/>
        <end position="142"/>
    </location>
</feature>
<feature type="helix" evidence="12">
    <location>
        <begin position="147"/>
        <end position="165"/>
    </location>
</feature>
<feature type="strand" evidence="12">
    <location>
        <begin position="172"/>
        <end position="174"/>
    </location>
</feature>
<feature type="strand" evidence="12">
    <location>
        <begin position="178"/>
        <end position="182"/>
    </location>
</feature>
<feature type="strand" evidence="12">
    <location>
        <begin position="187"/>
        <end position="193"/>
    </location>
</feature>
<feature type="strand" evidence="12">
    <location>
        <begin position="196"/>
        <end position="202"/>
    </location>
</feature>
<feature type="helix" evidence="12">
    <location>
        <begin position="207"/>
        <end position="209"/>
    </location>
</feature>
<feature type="strand" evidence="12">
    <location>
        <begin position="211"/>
        <end position="213"/>
    </location>
</feature>
<feature type="strand" evidence="12">
    <location>
        <begin position="217"/>
        <end position="222"/>
    </location>
</feature>
<feature type="helix" evidence="12">
    <location>
        <begin position="224"/>
        <end position="228"/>
    </location>
</feature>
<organismHost>
    <name type="scientific">Epomops franqueti</name>
    <name type="common">Franquet's epauletted fruit bat</name>
    <name type="synonym">Epomophorus franqueti</name>
    <dbReference type="NCBI Taxonomy" id="77231"/>
</organismHost>
<organismHost>
    <name type="scientific">Homo sapiens</name>
    <name type="common">Human</name>
    <dbReference type="NCBI Taxonomy" id="9606"/>
</organismHost>
<organismHost>
    <name type="scientific">Myonycteris torquata</name>
    <name type="common">Little collared fruit bat</name>
    <dbReference type="NCBI Taxonomy" id="77243"/>
</organismHost>
<accession>Q05322</accession>
<accession>Q773N1</accession>
<accession>Q8JS60</accession>
<accession>Q9DQD2</accession>
<protein>
    <recommendedName>
        <fullName>Membrane-associated protein VP24</fullName>
    </recommendedName>
    <alternativeName>
        <fullName evidence="10">Ebola VP24</fullName>
        <shortName evidence="10">eVP24</shortName>
    </alternativeName>
</protein>
<name>VP24_EBOZM</name>
<reference key="1">
    <citation type="journal article" date="1993" name="Virus Res.">
        <title>Sequence analysis of the Ebola virus genome: organization, genetic elements, and comparison with the genome of Marburg virus.</title>
        <authorList>
            <person name="Sanchez A."/>
            <person name="Kiley M.P."/>
            <person name="Holloway B.P."/>
            <person name="Auperin D.D."/>
        </authorList>
    </citation>
    <scope>NUCLEOTIDE SEQUENCE [GENOMIC RNA]</scope>
</reference>
<reference key="2">
    <citation type="journal article" date="1999" name="J. Gen. Virol.">
        <title>Characterization of the L gene and 5' trailer region of Ebola virus.</title>
        <authorList>
            <person name="Volchkov V.E."/>
            <person name="Volchkova V.A."/>
            <person name="Chepurnov A.A."/>
            <person name="Blinov V.M."/>
            <person name="Netesov S.V."/>
            <person name="Feldmann H."/>
        </authorList>
    </citation>
    <scope>NUCLEOTIDE SEQUENCE [GENOMIC RNA]</scope>
</reference>
<reference key="3">
    <citation type="journal article" date="2000" name="Virology">
        <title>Molecular characterization of guinea pig-adapted variants of Ebola virus.</title>
        <authorList>
            <person name="Volchkov V.E."/>
            <person name="Chepurnov A.A."/>
            <person name="Volchkova V.A."/>
            <person name="Ternovoj V.A."/>
            <person name="Klenk H.D."/>
        </authorList>
    </citation>
    <scope>NUCLEOTIDE SEQUENCE [GENOMIC RNA]</scope>
    <source>
        <strain>Isolate guinea pig-adapted</strain>
    </source>
</reference>
<reference key="4">
    <citation type="submission" date="2002-08" db="EMBL/GenBank/DDBJ databases">
        <authorList>
            <person name="Wilson J.A."/>
            <person name="Kondig J.P."/>
            <person name="Kuehne A.I."/>
            <person name="Hart M.K."/>
        </authorList>
    </citation>
    <scope>NUCLEOTIDE SEQUENCE [GENOMIC RNA]</scope>
    <source>
        <strain>Isolate mouse-adapted</strain>
    </source>
</reference>
<reference key="5">
    <citation type="journal article" date="2002" name="Mol. Cell">
        <title>The assembly of Ebola virus nucleocapsid requires virion-associated proteins 35 and 24 and posttranslational modification of nucleoprotein.</title>
        <authorList>
            <person name="Huang Y."/>
            <person name="Xu L."/>
            <person name="Sun Y."/>
            <person name="Nabel G.J."/>
        </authorList>
    </citation>
    <scope>FUNCTION</scope>
</reference>
<reference key="6">
    <citation type="journal article" date="2003" name="J. Virol.">
        <title>Biochemical and functional characterization of the Ebola virus VP24 protein: implications for a role in virus assembly and budding.</title>
        <authorList>
            <person name="Han Z."/>
            <person name="Boshra H."/>
            <person name="Sunyer J.O."/>
            <person name="Zwiers S.H."/>
            <person name="Paragas J."/>
            <person name="Harty R.N."/>
        </authorList>
    </citation>
    <scope>FUNCTION</scope>
    <scope>SUBCELLULAR LOCATION</scope>
</reference>
<reference key="7">
    <citation type="journal article" date="2004" name="J. Virol.">
        <title>Contribution of ebola virus glycoprotein, nucleoprotein, and VP24 to budding of VP40 virus-like particles.</title>
        <authorList>
            <person name="Licata J.M."/>
            <person name="Johnson R.F."/>
            <person name="Han Z."/>
            <person name="Harty R.N."/>
        </authorList>
    </citation>
    <scope>FUNCTION</scope>
</reference>
<reference key="8">
    <citation type="journal article" date="2006" name="J. Virol.">
        <title>Ebola virus VP24 binds karyopherin alpha-1 and blocks STAT1 nuclear accumulation.</title>
        <authorList>
            <person name="Reid S.P."/>
            <person name="Leung L.W."/>
            <person name="Hartman A.L."/>
            <person name="Martinez O."/>
            <person name="Shaw M.L."/>
            <person name="Carbonnelle C."/>
            <person name="Volchkov V.E."/>
            <person name="Nichol S.T."/>
            <person name="Basler C.F."/>
        </authorList>
    </citation>
    <scope>INTERACTION WITH HOST KPNA1</scope>
</reference>
<reference key="9">
    <citation type="journal article" date="2007" name="J. Virol.">
        <title>Ebola virus VP24 proteins inhibit the interaction of NPI-1 subfamily karyopherin alpha proteins with activated STAT1.</title>
        <authorList>
            <person name="Reid S.P."/>
            <person name="Valmas C."/>
            <person name="Martinez O."/>
            <person name="Sanchez F.M."/>
            <person name="Basler C.F."/>
        </authorList>
    </citation>
    <scope>FUNCTION</scope>
    <scope>INTERACTION WITH HOST KPNA1; KPNA5 AND KPNA6</scope>
</reference>
<reference key="10">
    <citation type="journal article" date="2012" name="PLoS Pathog.">
        <title>The ebola virus interferon antagonist VP24 directly binds STAT1 and has a novel, pyramidal fold.</title>
        <authorList>
            <person name="Zhang A.P."/>
            <person name="Bornholdt Z.A."/>
            <person name="Liu T."/>
            <person name="Abelson D.M."/>
            <person name="Lee D.E."/>
            <person name="Li S."/>
            <person name="Woods V.L. Jr."/>
            <person name="Saphire E.O."/>
        </authorList>
    </citation>
    <scope>FUNCTION</scope>
    <scope>INTERACTION WITH HOST STAT1</scope>
</reference>
<reference key="11">
    <citation type="journal article" date="2017" name="Sci. Rep.">
        <title>Ebola virus VP24 interacts with NP to facilitate nucleocapsid assembly and genome packaging.</title>
        <authorList>
            <person name="Banadyga L."/>
            <person name="Hoenen T."/>
            <person name="Ambroggio X."/>
            <person name="Dunham E."/>
            <person name="Groseth A."/>
            <person name="Ebihara H."/>
        </authorList>
    </citation>
    <scope>FUNCTION</scope>
    <scope>INTERACTION WITH NUCLEOPROTEIN NP AND VP35</scope>
    <scope>SUBCELLULAR LOCATION</scope>
    <scope>MUTAGENESIS OF VAL-170 AND ASN-171</scope>
</reference>
<reference key="12">
    <citation type="journal article" date="2017" name="Nature">
        <title>Structure and assembly of the Ebola virus nucleocapsid.</title>
        <authorList>
            <person name="Wan W."/>
            <person name="Kolesnikova L."/>
            <person name="Clarke M."/>
            <person name="Koehler A."/>
            <person name="Noda T."/>
            <person name="Becker S."/>
            <person name="Briggs J.A.G."/>
        </authorList>
    </citation>
    <scope>STRUCTURE BY ELECTRON MICROSCOPY (7.30 ANGSTROMS)</scope>
</reference>
<reference key="13">
    <citation type="journal article" date="2014" name="Cell Host Microbe">
        <title>Ebola virus VP24 targets a unique NLS binding site on karyopherin alpha 5 to selectively compete with nuclear import of phosphorylated STAT1.</title>
        <authorList>
            <person name="Xu W."/>
            <person name="Edwards M.R."/>
            <person name="Borek D.M."/>
            <person name="Feagins A.R."/>
            <person name="Mittal A."/>
            <person name="Alinger J.B."/>
            <person name="Berry K.N."/>
            <person name="Yen B."/>
            <person name="Hamilton J."/>
            <person name="Brett T.J."/>
            <person name="Pappu R.V."/>
            <person name="Leung D.W."/>
            <person name="Basler C.F."/>
            <person name="Amarasinghe G.K."/>
        </authorList>
    </citation>
    <scope>X-RAY CRYSTALLOGRAPHY (3.15 ANGSTROMS) OF 16-231</scope>
    <scope>INTERACTION WITH HOST KPNA5</scope>
    <scope>MUTAGENESIS OF ARG-137</scope>
    <scope>FUNCTION</scope>
</reference>
<reference key="14">
    <citation type="journal article" date="2017" name="J. Virol.">
        <title>VP24-Karyopherin Alpha Binding Affinities Differ between Ebolavirus Species, Influencing Interferon Inhibition and VP24 Stability.</title>
        <authorList>
            <person name="Schwarz T.M."/>
            <person name="Edwards M.R."/>
            <person name="Diederichs A."/>
            <person name="Alinger J.B."/>
            <person name="Leung D.W."/>
            <person name="Amarasinghe G.K."/>
            <person name="Basler C.F."/>
        </authorList>
    </citation>
    <scope>INTERACTION WITH HOST KPNA1; KPNA5 AND KPNA6</scope>
    <scope>NOMENCLATURE</scope>
</reference>
<reference key="15">
    <citation type="journal article" date="2014" name="Cell Rep.">
        <title>The Marburg virus VP24 protein interacts with Keap1 to activate the cytoprotective antioxidant response pathway.</title>
        <authorList>
            <person name="Edwards M.R."/>
            <person name="Johnson B."/>
            <person name="Mire C.E."/>
            <person name="Xu W."/>
            <person name="Shabman R.S."/>
            <person name="Speller L.N."/>
            <person name="Leung D.W."/>
            <person name="Geisbert T.W."/>
            <person name="Amarasinghe G.K."/>
            <person name="Basler C.F."/>
        </authorList>
    </citation>
    <scope>X-RAY CRYSTALLOGRAPHY (1.92 ANGSTROMS) OF 11-237</scope>
    <scope>INTERACTION WITH HOST KEAP1</scope>
</reference>
<dbReference type="EMBL" id="L11365">
    <property type="protein sequence ID" value="AAB81006.1"/>
    <property type="molecule type" value="Genomic_RNA"/>
</dbReference>
<dbReference type="EMBL" id="AF086833">
    <property type="protein sequence ID" value="AAD14588.1"/>
    <property type="molecule type" value="Genomic_RNA"/>
</dbReference>
<dbReference type="EMBL" id="AF272001">
    <property type="protein sequence ID" value="AAG40170.1"/>
    <property type="molecule type" value="Genomic_RNA"/>
</dbReference>
<dbReference type="EMBL" id="AY142960">
    <property type="protein sequence ID" value="AAN37510.1"/>
    <property type="molecule type" value="Genomic_RNA"/>
</dbReference>
<dbReference type="EMBL" id="AF499101">
    <property type="protein sequence ID" value="AAM76037.1"/>
    <property type="molecule type" value="Genomic_RNA"/>
</dbReference>
<dbReference type="RefSeq" id="NP_066250.1">
    <property type="nucleotide sequence ID" value="NC_002549.1"/>
</dbReference>
<dbReference type="PDB" id="4M0Q">
    <property type="method" value="X-ray"/>
    <property type="resolution" value="1.92 A"/>
    <property type="chains" value="A/B=11-237"/>
</dbReference>
<dbReference type="PDB" id="4U2X">
    <property type="method" value="X-ray"/>
    <property type="resolution" value="3.15 A"/>
    <property type="chains" value="A/B/C=16-231"/>
</dbReference>
<dbReference type="PDB" id="6EHM">
    <property type="method" value="EM"/>
    <property type="resolution" value="7.30 A"/>
    <property type="chains" value="C/D=1-251"/>
</dbReference>
<dbReference type="PDB" id="8USN">
    <property type="method" value="EM"/>
    <property type="resolution" value="8.90 A"/>
    <property type="chains" value="I/J=1-251"/>
</dbReference>
<dbReference type="PDB" id="8UST">
    <property type="method" value="EM"/>
    <property type="resolution" value="7.30 A"/>
    <property type="chains" value="I/J=1-251"/>
</dbReference>
<dbReference type="PDB" id="8Y9J">
    <property type="method" value="EM"/>
    <property type="resolution" value="4.60 A"/>
    <property type="chains" value="C/D=1-251"/>
</dbReference>
<dbReference type="PDBsum" id="4M0Q"/>
<dbReference type="PDBsum" id="4U2X"/>
<dbReference type="PDBsum" id="6EHM"/>
<dbReference type="PDBsum" id="8USN"/>
<dbReference type="PDBsum" id="8UST"/>
<dbReference type="PDBsum" id="8Y9J"/>
<dbReference type="EMDB" id="EMD-3871"/>
<dbReference type="EMDB" id="EMD-3872"/>
<dbReference type="EMDB" id="EMD-3873"/>
<dbReference type="EMDB" id="EMD-39081"/>
<dbReference type="EMDB" id="EMD-42509"/>
<dbReference type="SMR" id="Q05322"/>
<dbReference type="IntAct" id="Q05322">
    <property type="interactions" value="91"/>
</dbReference>
<dbReference type="DNASU" id="911828"/>
<dbReference type="GeneID" id="911828"/>
<dbReference type="KEGG" id="vg:911828"/>
<dbReference type="EvolutionaryTrace" id="Q05322"/>
<dbReference type="Proteomes" id="UP000007209">
    <property type="component" value="Genome"/>
</dbReference>
<dbReference type="Proteomes" id="UP000109874">
    <property type="component" value="Genome"/>
</dbReference>
<dbReference type="Proteomes" id="UP000149419">
    <property type="component" value="Genome"/>
</dbReference>
<dbReference type="Proteomes" id="UP000150973">
    <property type="component" value="Genome"/>
</dbReference>
<dbReference type="Proteomes" id="UP000180447">
    <property type="component" value="Genome"/>
</dbReference>
<dbReference type="GO" id="GO:0033645">
    <property type="term" value="C:host cell endomembrane system"/>
    <property type="evidence" value="ECO:0007669"/>
    <property type="project" value="UniProtKB-SubCell"/>
</dbReference>
<dbReference type="GO" id="GO:0020002">
    <property type="term" value="C:host cell plasma membrane"/>
    <property type="evidence" value="ECO:0000314"/>
    <property type="project" value="CACAO"/>
</dbReference>
<dbReference type="GO" id="GO:0016020">
    <property type="term" value="C:membrane"/>
    <property type="evidence" value="ECO:0007669"/>
    <property type="project" value="UniProtKB-KW"/>
</dbReference>
<dbReference type="GO" id="GO:0055036">
    <property type="term" value="C:virion membrane"/>
    <property type="evidence" value="ECO:0007669"/>
    <property type="project" value="UniProtKB-SubCell"/>
</dbReference>
<dbReference type="GO" id="GO:0005198">
    <property type="term" value="F:structural molecule activity"/>
    <property type="evidence" value="ECO:0007669"/>
    <property type="project" value="InterPro"/>
</dbReference>
<dbReference type="GO" id="GO:0052170">
    <property type="term" value="P:symbiont-mediated suppression of host innate immune response"/>
    <property type="evidence" value="ECO:0007669"/>
    <property type="project" value="UniProtKB-KW"/>
</dbReference>
<dbReference type="GO" id="GO:0039563">
    <property type="term" value="P:symbiont-mediated suppression of host JAK-STAT cascade via inhibition of STAT1 activity"/>
    <property type="evidence" value="ECO:0007669"/>
    <property type="project" value="UniProtKB-KW"/>
</dbReference>
<dbReference type="GO" id="GO:0039502">
    <property type="term" value="P:symbiont-mediated suppression of host type I interferon-mediated signaling pathway"/>
    <property type="evidence" value="ECO:0007669"/>
    <property type="project" value="UniProtKB-KW"/>
</dbReference>
<dbReference type="GO" id="GO:0046761">
    <property type="term" value="P:viral budding from plasma membrane"/>
    <property type="evidence" value="ECO:0000314"/>
    <property type="project" value="CACAO"/>
</dbReference>
<dbReference type="InterPro" id="IPR009433">
    <property type="entry name" value="Filo_VP24"/>
</dbReference>
<dbReference type="Pfam" id="PF06389">
    <property type="entry name" value="Filo_VP24"/>
    <property type="match status" value="1"/>
</dbReference>
<dbReference type="PIRSF" id="PIRSF011355">
    <property type="entry name" value="VP24"/>
    <property type="match status" value="1"/>
</dbReference>
<organism>
    <name type="scientific">Zaire ebolavirus (strain Mayinga-76)</name>
    <name type="common">ZEBOV</name>
    <name type="synonym">Zaire Ebola virus</name>
    <dbReference type="NCBI Taxonomy" id="128952"/>
    <lineage>
        <taxon>Viruses</taxon>
        <taxon>Riboviria</taxon>
        <taxon>Orthornavirae</taxon>
        <taxon>Negarnaviricota</taxon>
        <taxon>Haploviricotina</taxon>
        <taxon>Monjiviricetes</taxon>
        <taxon>Mononegavirales</taxon>
        <taxon>Filoviridae</taxon>
        <taxon>Orthoebolavirus</taxon>
        <taxon>Orthoebolavirus zairense</taxon>
        <taxon>Zaire ebolavirus</taxon>
    </lineage>
</organism>
<keyword id="KW-0002">3D-structure</keyword>
<keyword id="KW-1032">Host cell membrane</keyword>
<keyword id="KW-1043">Host membrane</keyword>
<keyword id="KW-0945">Host-virus interaction</keyword>
<keyword id="KW-1090">Inhibition of host innate immune response by virus</keyword>
<keyword id="KW-1114">Inhibition of host interferon signaling pathway by virus</keyword>
<keyword id="KW-1105">Inhibition of host STAT1 by virus</keyword>
<keyword id="KW-0922">Interferon antiviral system evasion</keyword>
<keyword id="KW-0472">Membrane</keyword>
<keyword id="KW-1185">Reference proteome</keyword>
<keyword id="KW-0899">Viral immunoevasion</keyword>
<keyword id="KW-0946">Virion</keyword>
<comment type="function">
    <text evidence="2 3 4 5 8">Prevents the establishment of cellular antiviral state by blocking the interferon-alpha/beta (IFN-alpha/beta) and IFN-gamma signaling pathways. Blocks the IFN-induced nuclear accumulation of host phosphorylated STAT1 by interacting with the STAT1-binding region of host importins. Alternatively also interacts directly with host STAT1 and may additionally inhibit its non-phosphorylated form. Plays a role in assembly of viral nucleocapsid and virion budding. May act as a minor matrix protein that plays a role in assembly of viral nucleocapsid and virion budding.</text>
</comment>
<comment type="subunit">
    <text evidence="5 6 7 8">Interacts with host importins KPNA1, KPNA5 and KPNA6 (PubMed:17928350, PubMed:25121748, PubMed:27974555). Interacts with host STAT1 (PubMed:22383882). Interacts with host KEAP1; this interaction activates host transcription factor NRF2 by blocking its interaction with KEAP1 (PubMed:24630991).</text>
</comment>
<comment type="interaction">
    <interactant intactId="EBI-6153153">
        <id>Q05322</id>
    </interactant>
    <interactant intactId="EBI-359923">
        <id>O60684</id>
        <label>KPNA6</label>
    </interactant>
    <organismsDiffer>true</organismsDiffer>
    <experiments>7</experiments>
</comment>
<comment type="interaction">
    <interactant intactId="EBI-6153153">
        <id>Q05322</id>
    </interactant>
    <interactant intactId="EBI-968218">
        <id>P20700</id>
        <label>LMNB1</label>
    </interactant>
    <organismsDiffer>true</organismsDiffer>
    <experiments>6</experiments>
</comment>
<comment type="subcellular location">
    <subcellularLocation>
        <location evidence="3">Virion membrane</location>
        <topology evidence="3">Peripheral membrane protein</topology>
    </subcellularLocation>
    <subcellularLocation>
        <location evidence="3">Host cell membrane</location>
        <topology evidence="3">Peripheral membrane protein</topology>
        <orientation evidence="3">Cytoplasmic side</orientation>
    </subcellularLocation>
    <subcellularLocation>
        <location evidence="3">Host endomembrane system</location>
        <topology evidence="3">Peripheral membrane protein</topology>
    </subcellularLocation>
    <text evidence="1">In virion, localizes on the intravirional side of the membrane. In the host cell, it is found associated with virus-induced membrane proliferation foci and to the plasma membrane where budding takes place (By similarity).</text>
</comment>
<comment type="similarity">
    <text evidence="11">Belongs to the filoviridae membrane-associated protein VP24 family.</text>
</comment>
<sequence length="251" mass="28219">MAKATGRYNLISPKKDLEKGVVLSDLCNFLVSQTIQGWKVYWAGIEFDVTHKGMALLHRLKTNDFAPAWSMTRNLFPHLFQNPNSTIESPLWALRVILAAGIQDQLIDQSLIEPLAGALGLISDWLLTTNTNHFNMRTQRVKEQLSLKMLSLIRSNILKFINKLDALHVVNYNGLLSSIEIGTQNHTIIITRTNMGFLVELQEPDKSAMNRMKPGPAKFSLLHESTLKAFTQGSSTRMQSLILEFNSSLAI</sequence>
<gene>
    <name type="primary">VP24</name>
</gene>
<evidence type="ECO:0000250" key="1"/>
<evidence type="ECO:0000269" key="2">
    <source>
    </source>
</evidence>
<evidence type="ECO:0000269" key="3">
    <source>
    </source>
</evidence>
<evidence type="ECO:0000269" key="4">
    <source>
    </source>
</evidence>
<evidence type="ECO:0000269" key="5">
    <source>
    </source>
</evidence>
<evidence type="ECO:0000269" key="6">
    <source>
    </source>
</evidence>
<evidence type="ECO:0000269" key="7">
    <source>
    </source>
</evidence>
<evidence type="ECO:0000269" key="8">
    <source>
    </source>
</evidence>
<evidence type="ECO:0000269" key="9">
    <source>
    </source>
</evidence>
<evidence type="ECO:0000303" key="10">
    <source>
    </source>
</evidence>
<evidence type="ECO:0000305" key="11"/>
<evidence type="ECO:0007829" key="12">
    <source>
        <dbReference type="PDB" id="4M0Q"/>
    </source>
</evidence>